<name>OADG1_SALPA</name>
<feature type="chain" id="PRO_0000216454" description="Probable oxaloacetate decarboxylase gamma chain 1">
    <location>
        <begin position="1"/>
        <end position="79"/>
    </location>
</feature>
<feature type="transmembrane region" description="Helical" evidence="1">
    <location>
        <begin position="10"/>
        <end position="32"/>
    </location>
</feature>
<gene>
    <name evidence="1" type="primary">oadG1</name>
    <name type="ordered locus">SPA0057</name>
</gene>
<dbReference type="EC" id="7.2.4.2" evidence="1"/>
<dbReference type="EMBL" id="CP000026">
    <property type="protein sequence ID" value="AAV76092.1"/>
    <property type="molecule type" value="Genomic_DNA"/>
</dbReference>
<dbReference type="RefSeq" id="WP_001001155.1">
    <property type="nucleotide sequence ID" value="NC_006511.1"/>
</dbReference>
<dbReference type="SMR" id="Q5PKI8"/>
<dbReference type="KEGG" id="spt:SPA0057"/>
<dbReference type="HOGENOM" id="CLU_168750_3_2_6"/>
<dbReference type="Proteomes" id="UP000008185">
    <property type="component" value="Chromosome"/>
</dbReference>
<dbReference type="GO" id="GO:0005886">
    <property type="term" value="C:plasma membrane"/>
    <property type="evidence" value="ECO:0007669"/>
    <property type="project" value="UniProtKB-SubCell"/>
</dbReference>
<dbReference type="GO" id="GO:0015451">
    <property type="term" value="F:decarboxylation-driven active transmembrane transporter activity"/>
    <property type="evidence" value="ECO:0007669"/>
    <property type="project" value="UniProtKB-EC"/>
</dbReference>
<dbReference type="GO" id="GO:0008948">
    <property type="term" value="F:oxaloacetate decarboxylase activity"/>
    <property type="evidence" value="ECO:0007669"/>
    <property type="project" value="UniProtKB-UniRule"/>
</dbReference>
<dbReference type="GO" id="GO:0015081">
    <property type="term" value="F:sodium ion transmembrane transporter activity"/>
    <property type="evidence" value="ECO:0007669"/>
    <property type="project" value="UniProtKB-UniRule"/>
</dbReference>
<dbReference type="GO" id="GO:0036376">
    <property type="term" value="P:sodium ion export across plasma membrane"/>
    <property type="evidence" value="ECO:0007669"/>
    <property type="project" value="InterPro"/>
</dbReference>
<dbReference type="HAMAP" id="MF_00404">
    <property type="entry name" value="OadG"/>
    <property type="match status" value="1"/>
</dbReference>
<dbReference type="InterPro" id="IPR005899">
    <property type="entry name" value="Na_pump_deCOase"/>
</dbReference>
<dbReference type="InterPro" id="IPR023424">
    <property type="entry name" value="OadG"/>
</dbReference>
<dbReference type="NCBIfam" id="TIGR01195">
    <property type="entry name" value="oadG_fam"/>
    <property type="match status" value="1"/>
</dbReference>
<dbReference type="NCBIfam" id="NF002792">
    <property type="entry name" value="PRK02919.1"/>
    <property type="match status" value="1"/>
</dbReference>
<dbReference type="Pfam" id="PF04277">
    <property type="entry name" value="OAD_gamma"/>
    <property type="match status" value="1"/>
</dbReference>
<evidence type="ECO:0000255" key="1">
    <source>
        <dbReference type="HAMAP-Rule" id="MF_00404"/>
    </source>
</evidence>
<accession>Q5PKI8</accession>
<proteinExistence type="inferred from homology"/>
<sequence length="79" mass="8651">MNEAVLLGEGFTLMFLGMGFVLSFLFLLIFAIRGMSAVITRFFPEPVAAPAPRAVPVVDDFTRLKPVIAAAIHHHRLNA</sequence>
<keyword id="KW-1003">Cell membrane</keyword>
<keyword id="KW-0406">Ion transport</keyword>
<keyword id="KW-0472">Membrane</keyword>
<keyword id="KW-0915">Sodium</keyword>
<keyword id="KW-0739">Sodium transport</keyword>
<keyword id="KW-1278">Translocase</keyword>
<keyword id="KW-0812">Transmembrane</keyword>
<keyword id="KW-1133">Transmembrane helix</keyword>
<keyword id="KW-0813">Transport</keyword>
<comment type="function">
    <text evidence="1">Catalyzes the decarboxylation of oxaloacetate coupled to Na(+) translocation.</text>
</comment>
<comment type="catalytic activity">
    <reaction evidence="1">
        <text>oxaloacetate + 2 Na(+)(in) + H(+) = pyruvate + 2 Na(+)(out) + CO2</text>
        <dbReference type="Rhea" id="RHEA:57724"/>
        <dbReference type="ChEBI" id="CHEBI:15361"/>
        <dbReference type="ChEBI" id="CHEBI:15378"/>
        <dbReference type="ChEBI" id="CHEBI:16452"/>
        <dbReference type="ChEBI" id="CHEBI:16526"/>
        <dbReference type="ChEBI" id="CHEBI:29101"/>
        <dbReference type="EC" id="7.2.4.2"/>
    </reaction>
</comment>
<comment type="cofactor">
    <cofactor evidence="1">
        <name>Na(+)</name>
        <dbReference type="ChEBI" id="CHEBI:29101"/>
    </cofactor>
</comment>
<comment type="subunit">
    <text evidence="1">Heterotrimer of an alpha, a beta and a gamma subunit.</text>
</comment>
<comment type="subcellular location">
    <subcellularLocation>
        <location evidence="1">Cell membrane</location>
        <topology evidence="1">Single-pass membrane protein</topology>
    </subcellularLocation>
</comment>
<comment type="similarity">
    <text evidence="1">Belongs to the OadG family.</text>
</comment>
<reference key="1">
    <citation type="journal article" date="2004" name="Nat. Genet.">
        <title>Comparison of genome degradation in Paratyphi A and Typhi, human-restricted serovars of Salmonella enterica that cause typhoid.</title>
        <authorList>
            <person name="McClelland M."/>
            <person name="Sanderson K.E."/>
            <person name="Clifton S.W."/>
            <person name="Latreille P."/>
            <person name="Porwollik S."/>
            <person name="Sabo A."/>
            <person name="Meyer R."/>
            <person name="Bieri T."/>
            <person name="Ozersky P."/>
            <person name="McLellan M."/>
            <person name="Harkins C.R."/>
            <person name="Wang C."/>
            <person name="Nguyen C."/>
            <person name="Berghoff A."/>
            <person name="Elliott G."/>
            <person name="Kohlberg S."/>
            <person name="Strong C."/>
            <person name="Du F."/>
            <person name="Carter J."/>
            <person name="Kremizki C."/>
            <person name="Layman D."/>
            <person name="Leonard S."/>
            <person name="Sun H."/>
            <person name="Fulton L."/>
            <person name="Nash W."/>
            <person name="Miner T."/>
            <person name="Minx P."/>
            <person name="Delehaunty K."/>
            <person name="Fronick C."/>
            <person name="Magrini V."/>
            <person name="Nhan M."/>
            <person name="Warren W."/>
            <person name="Florea L."/>
            <person name="Spieth J."/>
            <person name="Wilson R.K."/>
        </authorList>
    </citation>
    <scope>NUCLEOTIDE SEQUENCE [LARGE SCALE GENOMIC DNA]</scope>
    <source>
        <strain>ATCC 9150 / SARB42</strain>
    </source>
</reference>
<protein>
    <recommendedName>
        <fullName evidence="1">Probable oxaloacetate decarboxylase gamma chain 1</fullName>
        <ecNumber evidence="1">7.2.4.2</ecNumber>
    </recommendedName>
</protein>
<organism>
    <name type="scientific">Salmonella paratyphi A (strain ATCC 9150 / SARB42)</name>
    <dbReference type="NCBI Taxonomy" id="295319"/>
    <lineage>
        <taxon>Bacteria</taxon>
        <taxon>Pseudomonadati</taxon>
        <taxon>Pseudomonadota</taxon>
        <taxon>Gammaproteobacteria</taxon>
        <taxon>Enterobacterales</taxon>
        <taxon>Enterobacteriaceae</taxon>
        <taxon>Salmonella</taxon>
    </lineage>
</organism>